<feature type="chain" id="PRO_0000078990" description="Nuclear export protein">
    <location>
        <begin position="1"/>
        <end position="121"/>
    </location>
</feature>
<feature type="short sequence motif" description="Nuclear export signal" evidence="1">
    <location>
        <begin position="12"/>
        <end position="21"/>
    </location>
</feature>
<feature type="short sequence motif" description="Nuclear export signal" evidence="1">
    <location>
        <begin position="85"/>
        <end position="94"/>
    </location>
</feature>
<feature type="sequence conflict" description="In Ref. 1; AAB93936." ref="1">
    <original>L</original>
    <variation>S</variation>
    <location>
        <position position="79"/>
    </location>
</feature>
<comment type="function">
    <text evidence="1">Mediates the nuclear export of encapsidated genomic RNAs (ribonucleoproteins, RNPs). Acts as an adapter between viral RNPs complexes and the nuclear export machinery of the cell. Possesses no intrinsic RNA-binding activity, but includes a C-terminal M1-binding domain. This domain is believed to allow recognition of RNPs bound to the protein M1. Since protein M1 is not available in large quantities before late stages of infection, such an indirect recognition mechanism probably ensures that genomic RNPs are not exported from the host nucleus until sufficient quantities of viral mRNA and progeny genomic RNA have been synthesized. Furthermore, the RNPs enter the host cytoplasm only when associated with the M1 protein that is necessary to guide them to the plasma membrane. May down-regulate viral RNA synthesis when overproduced.</text>
</comment>
<comment type="subunit">
    <text evidence="1">Interacts with protein M1. May interact with host nucleoporin RAB/HRB and exportin XPO1/CRM1.</text>
</comment>
<comment type="subcellular location">
    <subcellularLocation>
        <location evidence="1">Virion</location>
    </subcellularLocation>
    <subcellularLocation>
        <location evidence="1">Host nucleus</location>
    </subcellularLocation>
</comment>
<comment type="alternative products">
    <event type="alternative splicing"/>
    <isoform>
        <id>O57266-1</id>
        <name>NEP</name>
        <name>NS2</name>
        <sequence type="displayed"/>
    </isoform>
    <isoform>
        <id>O57267-1</id>
        <name>NS1</name>
        <sequence type="external"/>
    </isoform>
</comment>
<comment type="miscellaneous">
    <text>Average number present in a viral particle is estimated to be 130-200 molecules.</text>
</comment>
<comment type="similarity">
    <text evidence="1">Belongs to the influenza viruses NEP family.</text>
</comment>
<sequence>MDSNTTSSFQDILVRMSKMQLESSSGDLNGMITQFESLKLYRDLLGEAVMRMGDLHLLQSRNGKWREQLSQKFEEIRWLIEEVRHRLKNTESSFEQITFMQALQLLLEVEQEIRTFSFQLI</sequence>
<name>NEP_I80AD</name>
<evidence type="ECO:0000255" key="1">
    <source>
        <dbReference type="HAMAP-Rule" id="MF_04067"/>
    </source>
</evidence>
<organism>
    <name type="scientific">Influenza A virus (strain A/Gull/Minnesota/945/1980 H13N6)</name>
    <dbReference type="NCBI Taxonomy" id="385597"/>
    <lineage>
        <taxon>Viruses</taxon>
        <taxon>Riboviria</taxon>
        <taxon>Orthornavirae</taxon>
        <taxon>Negarnaviricota</taxon>
        <taxon>Polyploviricotina</taxon>
        <taxon>Insthoviricetes</taxon>
        <taxon>Articulavirales</taxon>
        <taxon>Orthomyxoviridae</taxon>
        <taxon>Alphainfluenzavirus</taxon>
        <taxon>Alphainfluenzavirus influenzae</taxon>
        <taxon>Influenza A virus</taxon>
    </lineage>
</organism>
<accession>O57266</accession>
<accession>Q20NV6</accession>
<reference key="1">
    <citation type="submission" date="1997-04" db="EMBL/GenBank/DDBJ databases">
        <title>Comparison of avian influenza nonstructural gene sequences.</title>
        <authorList>
            <person name="Suarez D.L."/>
        </authorList>
    </citation>
    <scope>NUCLEOTIDE SEQUENCE [GENOMIC RNA]</scope>
</reference>
<reference key="2">
    <citation type="journal article" date="2006" name="Science">
        <title>Large-scale sequence analysis of avian influenza isolates.</title>
        <authorList>
            <person name="Obenauer J.C."/>
            <person name="Denson J."/>
            <person name="Mehta P.K."/>
            <person name="Su X."/>
            <person name="Mukatira S."/>
            <person name="Finkelstein D.B."/>
            <person name="Xu X."/>
            <person name="Wang J."/>
            <person name="Ma J."/>
            <person name="Fan Y."/>
            <person name="Rakestraw K.M."/>
            <person name="Webster R.G."/>
            <person name="Hoffmann E."/>
            <person name="Krauss S."/>
            <person name="Zheng J."/>
            <person name="Zhang Z."/>
            <person name="Naeve C.W."/>
        </authorList>
    </citation>
    <scope>NUCLEOTIDE SEQUENCE [GENOMIC RNA]</scope>
</reference>
<protein>
    <recommendedName>
        <fullName evidence="1">Nuclear export protein</fullName>
        <shortName evidence="1">NEP</shortName>
    </recommendedName>
    <alternativeName>
        <fullName evidence="1">Non-structural protein 2</fullName>
        <shortName evidence="1">NS2</shortName>
    </alternativeName>
</protein>
<proteinExistence type="inferred from homology"/>
<keyword id="KW-0025">Alternative splicing</keyword>
<keyword id="KW-1048">Host nucleus</keyword>
<keyword id="KW-0945">Host-virus interaction</keyword>
<keyword id="KW-0813">Transport</keyword>
<keyword id="KW-0946">Virion</keyword>
<organismHost>
    <name type="scientific">Aves</name>
    <dbReference type="NCBI Taxonomy" id="8782"/>
</organismHost>
<dbReference type="EMBL" id="U96738">
    <property type="protein sequence ID" value="AAB93936.1"/>
    <property type="molecule type" value="Genomic_RNA"/>
</dbReference>
<dbReference type="EMBL" id="CY005862">
    <property type="protein sequence ID" value="ABB21767.1"/>
    <property type="molecule type" value="Genomic_RNA"/>
</dbReference>
<dbReference type="SMR" id="O57266"/>
<dbReference type="Proteomes" id="UP000008581">
    <property type="component" value="Genome"/>
</dbReference>
<dbReference type="GO" id="GO:0042025">
    <property type="term" value="C:host cell nucleus"/>
    <property type="evidence" value="ECO:0007669"/>
    <property type="project" value="UniProtKB-SubCell"/>
</dbReference>
<dbReference type="GO" id="GO:0044423">
    <property type="term" value="C:virion component"/>
    <property type="evidence" value="ECO:0007669"/>
    <property type="project" value="UniProtKB-UniRule"/>
</dbReference>
<dbReference type="GO" id="GO:0039675">
    <property type="term" value="P:exit of virus from host cell nucleus through nuclear pore"/>
    <property type="evidence" value="ECO:0007669"/>
    <property type="project" value="UniProtKB-UniRule"/>
</dbReference>
<dbReference type="Gene3D" id="1.10.287.230">
    <property type="match status" value="1"/>
</dbReference>
<dbReference type="HAMAP" id="MF_04067">
    <property type="entry name" value="INFV_NEP"/>
    <property type="match status" value="1"/>
</dbReference>
<dbReference type="InterPro" id="IPR000968">
    <property type="entry name" value="Flu_NS2"/>
</dbReference>
<dbReference type="Pfam" id="PF00601">
    <property type="entry name" value="Flu_NS2"/>
    <property type="match status" value="1"/>
</dbReference>
<dbReference type="SUPFAM" id="SSF101156">
    <property type="entry name" value="Nonstructural protein ns2, Nep, M1-binding domain"/>
    <property type="match status" value="1"/>
</dbReference>
<gene>
    <name evidence="1" type="primary">NS</name>
</gene>